<feature type="chain" id="PRO_0000111263" description="Small ribosomal subunit protein bS18">
    <location>
        <begin position="1"/>
        <end position="91"/>
    </location>
</feature>
<reference key="1">
    <citation type="journal article" date="2004" name="PLoS Biol.">
        <title>Phylogenomics of the reproductive parasite Wolbachia pipientis wMel: a streamlined genome overrun by mobile genetic elements.</title>
        <authorList>
            <person name="Wu M."/>
            <person name="Sun L.V."/>
            <person name="Vamathevan J.J."/>
            <person name="Riegler M."/>
            <person name="DeBoy R.T."/>
            <person name="Brownlie J.C."/>
            <person name="McGraw E.A."/>
            <person name="Martin W."/>
            <person name="Esser C."/>
            <person name="Ahmadinejad N."/>
            <person name="Wiegand C."/>
            <person name="Madupu R."/>
            <person name="Beanan M.J."/>
            <person name="Brinkac L.M."/>
            <person name="Daugherty S.C."/>
            <person name="Durkin A.S."/>
            <person name="Kolonay J.F."/>
            <person name="Nelson W.C."/>
            <person name="Mohamoud Y."/>
            <person name="Lee P."/>
            <person name="Berry K.J."/>
            <person name="Young M.B."/>
            <person name="Utterback T.R."/>
            <person name="Weidman J.F."/>
            <person name="Nierman W.C."/>
            <person name="Paulsen I.T."/>
            <person name="Nelson K.E."/>
            <person name="Tettelin H."/>
            <person name="O'Neill S.L."/>
            <person name="Eisen J.A."/>
        </authorList>
    </citation>
    <scope>NUCLEOTIDE SEQUENCE [LARGE SCALE GENOMIC DNA]</scope>
</reference>
<name>RS18_WOLPM</name>
<comment type="function">
    <text evidence="1">Binds as a heterodimer with protein bS6 to the central domain of the 16S rRNA, where it helps stabilize the platform of the 30S subunit.</text>
</comment>
<comment type="subunit">
    <text evidence="1">Part of the 30S ribosomal subunit. Forms a tight heterodimer with protein bS6.</text>
</comment>
<comment type="similarity">
    <text evidence="1">Belongs to the bacterial ribosomal protein bS18 family.</text>
</comment>
<keyword id="KW-0687">Ribonucleoprotein</keyword>
<keyword id="KW-0689">Ribosomal protein</keyword>
<keyword id="KW-0694">RNA-binding</keyword>
<keyword id="KW-0699">rRNA-binding</keyword>
<accession>Q73GZ6</accession>
<evidence type="ECO:0000255" key="1">
    <source>
        <dbReference type="HAMAP-Rule" id="MF_00270"/>
    </source>
</evidence>
<evidence type="ECO:0000305" key="2"/>
<dbReference type="EMBL" id="AE017196">
    <property type="protein sequence ID" value="AAS14470.1"/>
    <property type="molecule type" value="Genomic_DNA"/>
</dbReference>
<dbReference type="RefSeq" id="WP_007548890.1">
    <property type="nucleotide sequence ID" value="NZ_OX384529.1"/>
</dbReference>
<dbReference type="SMR" id="Q73GZ6"/>
<dbReference type="EnsemblBacteria" id="AAS14470">
    <property type="protein sequence ID" value="AAS14470"/>
    <property type="gene ID" value="WD_0782"/>
</dbReference>
<dbReference type="GeneID" id="70036261"/>
<dbReference type="KEGG" id="wol:WD_0782"/>
<dbReference type="eggNOG" id="COG0238">
    <property type="taxonomic scope" value="Bacteria"/>
</dbReference>
<dbReference type="Proteomes" id="UP000008215">
    <property type="component" value="Chromosome"/>
</dbReference>
<dbReference type="GO" id="GO:0022627">
    <property type="term" value="C:cytosolic small ribosomal subunit"/>
    <property type="evidence" value="ECO:0007669"/>
    <property type="project" value="TreeGrafter"/>
</dbReference>
<dbReference type="GO" id="GO:0070181">
    <property type="term" value="F:small ribosomal subunit rRNA binding"/>
    <property type="evidence" value="ECO:0007669"/>
    <property type="project" value="TreeGrafter"/>
</dbReference>
<dbReference type="GO" id="GO:0003735">
    <property type="term" value="F:structural constituent of ribosome"/>
    <property type="evidence" value="ECO:0007669"/>
    <property type="project" value="InterPro"/>
</dbReference>
<dbReference type="GO" id="GO:0006412">
    <property type="term" value="P:translation"/>
    <property type="evidence" value="ECO:0007669"/>
    <property type="project" value="UniProtKB-UniRule"/>
</dbReference>
<dbReference type="Gene3D" id="4.10.640.10">
    <property type="entry name" value="Ribosomal protein S18"/>
    <property type="match status" value="1"/>
</dbReference>
<dbReference type="HAMAP" id="MF_00270">
    <property type="entry name" value="Ribosomal_bS18"/>
    <property type="match status" value="1"/>
</dbReference>
<dbReference type="InterPro" id="IPR001648">
    <property type="entry name" value="Ribosomal_bS18"/>
</dbReference>
<dbReference type="InterPro" id="IPR018275">
    <property type="entry name" value="Ribosomal_bS18_CS"/>
</dbReference>
<dbReference type="InterPro" id="IPR036870">
    <property type="entry name" value="Ribosomal_bS18_sf"/>
</dbReference>
<dbReference type="NCBIfam" id="TIGR00165">
    <property type="entry name" value="S18"/>
    <property type="match status" value="1"/>
</dbReference>
<dbReference type="PANTHER" id="PTHR13479">
    <property type="entry name" value="30S RIBOSOMAL PROTEIN S18"/>
    <property type="match status" value="1"/>
</dbReference>
<dbReference type="PANTHER" id="PTHR13479:SF40">
    <property type="entry name" value="SMALL RIBOSOMAL SUBUNIT PROTEIN BS18M"/>
    <property type="match status" value="1"/>
</dbReference>
<dbReference type="Pfam" id="PF01084">
    <property type="entry name" value="Ribosomal_S18"/>
    <property type="match status" value="1"/>
</dbReference>
<dbReference type="PRINTS" id="PR00974">
    <property type="entry name" value="RIBOSOMALS18"/>
</dbReference>
<dbReference type="SUPFAM" id="SSF46911">
    <property type="entry name" value="Ribosomal protein S18"/>
    <property type="match status" value="1"/>
</dbReference>
<dbReference type="PROSITE" id="PS00057">
    <property type="entry name" value="RIBOSOMAL_S18"/>
    <property type="match status" value="1"/>
</dbReference>
<gene>
    <name evidence="1" type="primary">rpsR</name>
    <name type="ordered locus">WD_0782</name>
</gene>
<organism>
    <name type="scientific">Wolbachia pipientis wMel</name>
    <dbReference type="NCBI Taxonomy" id="163164"/>
    <lineage>
        <taxon>Bacteria</taxon>
        <taxon>Pseudomonadati</taxon>
        <taxon>Pseudomonadota</taxon>
        <taxon>Alphaproteobacteria</taxon>
        <taxon>Rickettsiales</taxon>
        <taxon>Anaplasmataceae</taxon>
        <taxon>Wolbachieae</taxon>
        <taxon>Wolbachia</taxon>
    </lineage>
</organism>
<proteinExistence type="inferred from homology"/>
<protein>
    <recommendedName>
        <fullName evidence="1">Small ribosomal subunit protein bS18</fullName>
    </recommendedName>
    <alternativeName>
        <fullName evidence="2">30S ribosomal protein S18</fullName>
    </alternativeName>
</protein>
<sequence>MMKRRNSFNNSYVSVNNRTGFRRSKVCPLAASKDEDIDYKNIDLLSKFTSDYGRILPRRLTGVCAKKQRKLRLAIIRARFLALIPYCTKKV</sequence>